<dbReference type="EC" id="7.-.-.-" evidence="1"/>
<dbReference type="EMBL" id="CP001396">
    <property type="protein sequence ID" value="ACR64587.1"/>
    <property type="molecule type" value="Genomic_DNA"/>
</dbReference>
<dbReference type="RefSeq" id="WP_000133193.1">
    <property type="nucleotide sequence ID" value="NC_012759.1"/>
</dbReference>
<dbReference type="SMR" id="C4ZY90"/>
<dbReference type="GeneID" id="89516393"/>
<dbReference type="KEGG" id="ebw:BWG_1442"/>
<dbReference type="HOGENOM" id="CLU_095255_1_0_6"/>
<dbReference type="GO" id="GO:0005886">
    <property type="term" value="C:plasma membrane"/>
    <property type="evidence" value="ECO:0007669"/>
    <property type="project" value="UniProtKB-SubCell"/>
</dbReference>
<dbReference type="GO" id="GO:0022900">
    <property type="term" value="P:electron transport chain"/>
    <property type="evidence" value="ECO:0007669"/>
    <property type="project" value="UniProtKB-UniRule"/>
</dbReference>
<dbReference type="HAMAP" id="MF_00459">
    <property type="entry name" value="RsxA_RnfA"/>
    <property type="match status" value="1"/>
</dbReference>
<dbReference type="InterPro" id="IPR011293">
    <property type="entry name" value="Ion_transpt_RnfA/RsxA"/>
</dbReference>
<dbReference type="InterPro" id="IPR003667">
    <property type="entry name" value="NqrDE/RnfAE"/>
</dbReference>
<dbReference type="InterPro" id="IPR050133">
    <property type="entry name" value="NqrDE/RnfAE_oxidrdctase"/>
</dbReference>
<dbReference type="NCBIfam" id="NF003481">
    <property type="entry name" value="PRK05151.1"/>
    <property type="match status" value="1"/>
</dbReference>
<dbReference type="NCBIfam" id="TIGR01943">
    <property type="entry name" value="rnfA"/>
    <property type="match status" value="1"/>
</dbReference>
<dbReference type="PANTHER" id="PTHR30335">
    <property type="entry name" value="INTEGRAL MEMBRANE PROTEIN OF SOXR-REDUCING COMPLEX"/>
    <property type="match status" value="1"/>
</dbReference>
<dbReference type="PANTHER" id="PTHR30335:SF0">
    <property type="entry name" value="ION-TRANSLOCATING OXIDOREDUCTASE COMPLEX SUBUNIT A"/>
    <property type="match status" value="1"/>
</dbReference>
<dbReference type="Pfam" id="PF02508">
    <property type="entry name" value="Rnf-Nqr"/>
    <property type="match status" value="1"/>
</dbReference>
<dbReference type="PIRSF" id="PIRSF006102">
    <property type="entry name" value="NQR_DE"/>
    <property type="match status" value="1"/>
</dbReference>
<organism>
    <name type="scientific">Escherichia coli (strain K12 / MC4100 / BW2952)</name>
    <dbReference type="NCBI Taxonomy" id="595496"/>
    <lineage>
        <taxon>Bacteria</taxon>
        <taxon>Pseudomonadati</taxon>
        <taxon>Pseudomonadota</taxon>
        <taxon>Gammaproteobacteria</taxon>
        <taxon>Enterobacterales</taxon>
        <taxon>Enterobacteriaceae</taxon>
        <taxon>Escherichia</taxon>
    </lineage>
</organism>
<comment type="function">
    <text evidence="1">Part of a membrane-bound complex that couples electron transfer with translocation of ions across the membrane. Required to maintain the reduced state of SoxR.</text>
</comment>
<comment type="subunit">
    <text evidence="1">The complex is composed of six subunits: RsxA, RsxB, RsxC, RsxD, RsxE and RsxG.</text>
</comment>
<comment type="subcellular location">
    <subcellularLocation>
        <location evidence="1">Cell inner membrane</location>
        <topology evidence="1">Multi-pass membrane protein</topology>
    </subcellularLocation>
</comment>
<comment type="similarity">
    <text evidence="1">Belongs to the NqrDE/RnfAE family.</text>
</comment>
<proteinExistence type="inferred from homology"/>
<evidence type="ECO:0000255" key="1">
    <source>
        <dbReference type="HAMAP-Rule" id="MF_00459"/>
    </source>
</evidence>
<sequence>MTDYLLLFVGTVLVNNFVLVKFLGLCPFMGVSKKLETAMGMGLATTFVMTLASICAWLIDTWILIPLNLIYLRTLAFILVIAVVVQFTEMVVRKTSPVLYRLLGIFLPLITTNCAVLGVALLNINLGHNFLQSALYGFSAAVGFSLVMVLFAAIRERLAVADVPAPFRGNAIALITAGLMSLAFMGFSGLVKL</sequence>
<protein>
    <recommendedName>
        <fullName evidence="1">Ion-translocating oxidoreductase complex subunit A</fullName>
        <ecNumber evidence="1">7.-.-.-</ecNumber>
    </recommendedName>
    <alternativeName>
        <fullName evidence="1">Rsx electron transport complex subunit A</fullName>
    </alternativeName>
</protein>
<gene>
    <name evidence="1" type="primary">rsxA</name>
    <name type="ordered locus">BWG_1442</name>
</gene>
<accession>C4ZY90</accession>
<reference key="1">
    <citation type="journal article" date="2009" name="J. Bacteriol.">
        <title>Genomic sequencing reveals regulatory mutations and recombinational events in the widely used MC4100 lineage of Escherichia coli K-12.</title>
        <authorList>
            <person name="Ferenci T."/>
            <person name="Zhou Z."/>
            <person name="Betteridge T."/>
            <person name="Ren Y."/>
            <person name="Liu Y."/>
            <person name="Feng L."/>
            <person name="Reeves P.R."/>
            <person name="Wang L."/>
        </authorList>
    </citation>
    <scope>NUCLEOTIDE SEQUENCE [LARGE SCALE GENOMIC DNA]</scope>
    <source>
        <strain>K12 / MC4100 / BW2952</strain>
    </source>
</reference>
<name>RSXA_ECOBW</name>
<feature type="chain" id="PRO_1000206284" description="Ion-translocating oxidoreductase complex subunit A">
    <location>
        <begin position="1"/>
        <end position="193"/>
    </location>
</feature>
<feature type="transmembrane region" description="Helical" evidence="1">
    <location>
        <begin position="5"/>
        <end position="25"/>
    </location>
</feature>
<feature type="transmembrane region" description="Helical" evidence="1">
    <location>
        <begin position="39"/>
        <end position="59"/>
    </location>
</feature>
<feature type="transmembrane region" description="Helical" evidence="1">
    <location>
        <begin position="63"/>
        <end position="83"/>
    </location>
</feature>
<feature type="transmembrane region" description="Helical" evidence="1">
    <location>
        <begin position="102"/>
        <end position="122"/>
    </location>
</feature>
<feature type="transmembrane region" description="Helical" evidence="1">
    <location>
        <begin position="134"/>
        <end position="154"/>
    </location>
</feature>
<feature type="transmembrane region" description="Helical" evidence="1">
    <location>
        <begin position="171"/>
        <end position="191"/>
    </location>
</feature>
<keyword id="KW-0997">Cell inner membrane</keyword>
<keyword id="KW-1003">Cell membrane</keyword>
<keyword id="KW-0249">Electron transport</keyword>
<keyword id="KW-0472">Membrane</keyword>
<keyword id="KW-1278">Translocase</keyword>
<keyword id="KW-0812">Transmembrane</keyword>
<keyword id="KW-1133">Transmembrane helix</keyword>
<keyword id="KW-0813">Transport</keyword>